<keyword id="KW-0963">Cytoplasm</keyword>
<keyword id="KW-0378">Hydrolase</keyword>
<keyword id="KW-0540">Nuclease</keyword>
<keyword id="KW-1185">Reference proteome</keyword>
<keyword id="KW-0690">Ribosome biogenesis</keyword>
<name>YQGF_RHOP2</name>
<evidence type="ECO:0000255" key="1">
    <source>
        <dbReference type="HAMAP-Rule" id="MF_00651"/>
    </source>
</evidence>
<sequence length="160" mass="17134">MPALILPLIEAAGHWPARGSLLGLDLGTKTIGVAVSDPDRRLATGIETVARKAFTADAQRLLALAAGRNACGFVLGLPLNMDGSEGPRVQSTRAFARNFARLTELPIGLWDERLSTAAVERELIANDVSRAKRAKIIDEHAAIYILQGALDRLATLNRAD</sequence>
<proteinExistence type="inferred from homology"/>
<gene>
    <name type="ordered locus">RPB_2429</name>
</gene>
<dbReference type="EC" id="3.1.-.-" evidence="1"/>
<dbReference type="EMBL" id="CP000250">
    <property type="protein sequence ID" value="ABD07134.1"/>
    <property type="molecule type" value="Genomic_DNA"/>
</dbReference>
<dbReference type="RefSeq" id="WP_011441319.1">
    <property type="nucleotide sequence ID" value="NC_007778.1"/>
</dbReference>
<dbReference type="SMR" id="Q2IXC6"/>
<dbReference type="STRING" id="316058.RPB_2429"/>
<dbReference type="KEGG" id="rpb:RPB_2429"/>
<dbReference type="eggNOG" id="COG0816">
    <property type="taxonomic scope" value="Bacteria"/>
</dbReference>
<dbReference type="HOGENOM" id="CLU_098240_1_1_5"/>
<dbReference type="OrthoDB" id="9796140at2"/>
<dbReference type="Proteomes" id="UP000008809">
    <property type="component" value="Chromosome"/>
</dbReference>
<dbReference type="GO" id="GO:0005829">
    <property type="term" value="C:cytosol"/>
    <property type="evidence" value="ECO:0007669"/>
    <property type="project" value="TreeGrafter"/>
</dbReference>
<dbReference type="GO" id="GO:0004518">
    <property type="term" value="F:nuclease activity"/>
    <property type="evidence" value="ECO:0007669"/>
    <property type="project" value="UniProtKB-KW"/>
</dbReference>
<dbReference type="GO" id="GO:0000967">
    <property type="term" value="P:rRNA 5'-end processing"/>
    <property type="evidence" value="ECO:0007669"/>
    <property type="project" value="UniProtKB-UniRule"/>
</dbReference>
<dbReference type="CDD" id="cd16964">
    <property type="entry name" value="YqgF"/>
    <property type="match status" value="1"/>
</dbReference>
<dbReference type="Gene3D" id="3.30.420.140">
    <property type="entry name" value="YqgF/RNase H-like domain"/>
    <property type="match status" value="1"/>
</dbReference>
<dbReference type="HAMAP" id="MF_00651">
    <property type="entry name" value="Nuclease_YqgF"/>
    <property type="match status" value="1"/>
</dbReference>
<dbReference type="InterPro" id="IPR012337">
    <property type="entry name" value="RNaseH-like_sf"/>
</dbReference>
<dbReference type="InterPro" id="IPR005227">
    <property type="entry name" value="YqgF"/>
</dbReference>
<dbReference type="InterPro" id="IPR006641">
    <property type="entry name" value="YqgF/RNaseH-like_dom"/>
</dbReference>
<dbReference type="InterPro" id="IPR037027">
    <property type="entry name" value="YqgF/RNaseH-like_dom_sf"/>
</dbReference>
<dbReference type="NCBIfam" id="TIGR00250">
    <property type="entry name" value="RNAse_H_YqgF"/>
    <property type="match status" value="1"/>
</dbReference>
<dbReference type="PANTHER" id="PTHR33317">
    <property type="entry name" value="POLYNUCLEOTIDYL TRANSFERASE, RIBONUCLEASE H-LIKE SUPERFAMILY PROTEIN"/>
    <property type="match status" value="1"/>
</dbReference>
<dbReference type="PANTHER" id="PTHR33317:SF4">
    <property type="entry name" value="POLYNUCLEOTIDYL TRANSFERASE, RIBONUCLEASE H-LIKE SUPERFAMILY PROTEIN"/>
    <property type="match status" value="1"/>
</dbReference>
<dbReference type="Pfam" id="PF03652">
    <property type="entry name" value="RuvX"/>
    <property type="match status" value="1"/>
</dbReference>
<dbReference type="SMART" id="SM00732">
    <property type="entry name" value="YqgFc"/>
    <property type="match status" value="1"/>
</dbReference>
<dbReference type="SUPFAM" id="SSF53098">
    <property type="entry name" value="Ribonuclease H-like"/>
    <property type="match status" value="1"/>
</dbReference>
<accession>Q2IXC6</accession>
<organism>
    <name type="scientific">Rhodopseudomonas palustris (strain HaA2)</name>
    <dbReference type="NCBI Taxonomy" id="316058"/>
    <lineage>
        <taxon>Bacteria</taxon>
        <taxon>Pseudomonadati</taxon>
        <taxon>Pseudomonadota</taxon>
        <taxon>Alphaproteobacteria</taxon>
        <taxon>Hyphomicrobiales</taxon>
        <taxon>Nitrobacteraceae</taxon>
        <taxon>Rhodopseudomonas</taxon>
    </lineage>
</organism>
<protein>
    <recommendedName>
        <fullName evidence="1">Putative pre-16S rRNA nuclease</fullName>
        <ecNumber evidence="1">3.1.-.-</ecNumber>
    </recommendedName>
</protein>
<reference key="1">
    <citation type="submission" date="2006-01" db="EMBL/GenBank/DDBJ databases">
        <title>Complete sequence of Rhodopseudomonas palustris HaA2.</title>
        <authorList>
            <consortium name="US DOE Joint Genome Institute"/>
            <person name="Copeland A."/>
            <person name="Lucas S."/>
            <person name="Lapidus A."/>
            <person name="Barry K."/>
            <person name="Detter J.C."/>
            <person name="Glavina T."/>
            <person name="Hammon N."/>
            <person name="Israni S."/>
            <person name="Pitluck S."/>
            <person name="Chain P."/>
            <person name="Malfatti S."/>
            <person name="Shin M."/>
            <person name="Vergez L."/>
            <person name="Schmutz J."/>
            <person name="Larimer F."/>
            <person name="Land M."/>
            <person name="Hauser L."/>
            <person name="Pelletier D.A."/>
            <person name="Kyrpides N."/>
            <person name="Anderson I."/>
            <person name="Oda Y."/>
            <person name="Harwood C.S."/>
            <person name="Richardson P."/>
        </authorList>
    </citation>
    <scope>NUCLEOTIDE SEQUENCE [LARGE SCALE GENOMIC DNA]</scope>
    <source>
        <strain>HaA2</strain>
    </source>
</reference>
<comment type="function">
    <text evidence="1">Could be a nuclease involved in processing of the 5'-end of pre-16S rRNA.</text>
</comment>
<comment type="subcellular location">
    <subcellularLocation>
        <location evidence="1">Cytoplasm</location>
    </subcellularLocation>
</comment>
<comment type="similarity">
    <text evidence="1">Belongs to the YqgF nuclease family.</text>
</comment>
<feature type="chain" id="PRO_0000257579" description="Putative pre-16S rRNA nuclease">
    <location>
        <begin position="1"/>
        <end position="160"/>
    </location>
</feature>